<name>UPPP_GEOMG</name>
<protein>
    <recommendedName>
        <fullName evidence="1">Undecaprenyl-diphosphatase</fullName>
        <ecNumber evidence="1">3.6.1.27</ecNumber>
    </recommendedName>
    <alternativeName>
        <fullName evidence="1">Bacitracin resistance protein</fullName>
    </alternativeName>
    <alternativeName>
        <fullName evidence="1">Undecaprenyl pyrophosphate phosphatase</fullName>
    </alternativeName>
</protein>
<reference key="1">
    <citation type="journal article" date="2009" name="BMC Microbiol.">
        <title>The genome sequence of Geobacter metallireducens: features of metabolism, physiology and regulation common and dissimilar to Geobacter sulfurreducens.</title>
        <authorList>
            <person name="Aklujkar M."/>
            <person name="Krushkal J."/>
            <person name="DiBartolo G."/>
            <person name="Lapidus A."/>
            <person name="Land M.L."/>
            <person name="Lovley D.R."/>
        </authorList>
    </citation>
    <scope>NUCLEOTIDE SEQUENCE [LARGE SCALE GENOMIC DNA]</scope>
    <source>
        <strain>ATCC 53774 / DSM 7210 / GS-15</strain>
    </source>
</reference>
<feature type="chain" id="PRO_0000227619" description="Undecaprenyl-diphosphatase">
    <location>
        <begin position="1"/>
        <end position="269"/>
    </location>
</feature>
<feature type="transmembrane region" description="Helical" evidence="1">
    <location>
        <begin position="40"/>
        <end position="59"/>
    </location>
</feature>
<feature type="transmembrane region" description="Helical" evidence="1">
    <location>
        <begin position="87"/>
        <end position="107"/>
    </location>
</feature>
<feature type="transmembrane region" description="Helical" evidence="1">
    <location>
        <begin position="116"/>
        <end position="136"/>
    </location>
</feature>
<feature type="transmembrane region" description="Helical" evidence="1">
    <location>
        <begin position="160"/>
        <end position="180"/>
    </location>
</feature>
<feature type="transmembrane region" description="Helical" evidence="1">
    <location>
        <begin position="188"/>
        <end position="208"/>
    </location>
</feature>
<feature type="transmembrane region" description="Helical" evidence="1">
    <location>
        <begin position="220"/>
        <end position="240"/>
    </location>
</feature>
<feature type="transmembrane region" description="Helical" evidence="1">
    <location>
        <begin position="247"/>
        <end position="267"/>
    </location>
</feature>
<keyword id="KW-0046">Antibiotic resistance</keyword>
<keyword id="KW-0997">Cell inner membrane</keyword>
<keyword id="KW-1003">Cell membrane</keyword>
<keyword id="KW-0133">Cell shape</keyword>
<keyword id="KW-0961">Cell wall biogenesis/degradation</keyword>
<keyword id="KW-0378">Hydrolase</keyword>
<keyword id="KW-0472">Membrane</keyword>
<keyword id="KW-0573">Peptidoglycan synthesis</keyword>
<keyword id="KW-1185">Reference proteome</keyword>
<keyword id="KW-0812">Transmembrane</keyword>
<keyword id="KW-1133">Transmembrane helix</keyword>
<gene>
    <name evidence="1" type="primary">uppP</name>
    <name type="ordered locus">Gmet_3133</name>
</gene>
<sequence>MNPLHATVLGAIQGLTEVLPVSSSAHLILIPWLFGWPESGITFDVALHLGTLIALALYFRRDIAELVVNALSGLTGGAHSSATRLPWYIIAGCVPAAIVGKTLEEPIEAIFRANPAIIAAFLIGFGLLLALADTLGSKKSRMDQIDLKNAMMIGLAQCLALLPGVSRSGITITAALFLGFSRETAARFSFLLSLPIVAGAALLKVGHLVRHGVPEGELQPLLIGVGVSAVFGYVSVALLLKLVQRYSLYPFVWYRLLAGAGVLLFIFNQ</sequence>
<proteinExistence type="inferred from homology"/>
<evidence type="ECO:0000255" key="1">
    <source>
        <dbReference type="HAMAP-Rule" id="MF_01006"/>
    </source>
</evidence>
<dbReference type="EC" id="3.6.1.27" evidence="1"/>
<dbReference type="EMBL" id="CP000148">
    <property type="protein sequence ID" value="ABB33347.1"/>
    <property type="molecule type" value="Genomic_DNA"/>
</dbReference>
<dbReference type="RefSeq" id="WP_004514308.1">
    <property type="nucleotide sequence ID" value="NC_007517.1"/>
</dbReference>
<dbReference type="SMR" id="Q39QX7"/>
<dbReference type="STRING" id="269799.Gmet_3133"/>
<dbReference type="KEGG" id="gme:Gmet_3133"/>
<dbReference type="eggNOG" id="COG1968">
    <property type="taxonomic scope" value="Bacteria"/>
</dbReference>
<dbReference type="HOGENOM" id="CLU_060296_1_0_7"/>
<dbReference type="Proteomes" id="UP000007073">
    <property type="component" value="Chromosome"/>
</dbReference>
<dbReference type="GO" id="GO:0005886">
    <property type="term" value="C:plasma membrane"/>
    <property type="evidence" value="ECO:0007669"/>
    <property type="project" value="UniProtKB-SubCell"/>
</dbReference>
<dbReference type="GO" id="GO:0050380">
    <property type="term" value="F:undecaprenyl-diphosphatase activity"/>
    <property type="evidence" value="ECO:0007669"/>
    <property type="project" value="UniProtKB-UniRule"/>
</dbReference>
<dbReference type="GO" id="GO:0071555">
    <property type="term" value="P:cell wall organization"/>
    <property type="evidence" value="ECO:0007669"/>
    <property type="project" value="UniProtKB-KW"/>
</dbReference>
<dbReference type="GO" id="GO:0009252">
    <property type="term" value="P:peptidoglycan biosynthetic process"/>
    <property type="evidence" value="ECO:0007669"/>
    <property type="project" value="UniProtKB-KW"/>
</dbReference>
<dbReference type="GO" id="GO:0008360">
    <property type="term" value="P:regulation of cell shape"/>
    <property type="evidence" value="ECO:0007669"/>
    <property type="project" value="UniProtKB-KW"/>
</dbReference>
<dbReference type="GO" id="GO:0046677">
    <property type="term" value="P:response to antibiotic"/>
    <property type="evidence" value="ECO:0007669"/>
    <property type="project" value="UniProtKB-UniRule"/>
</dbReference>
<dbReference type="HAMAP" id="MF_01006">
    <property type="entry name" value="Undec_diphosphatase"/>
    <property type="match status" value="1"/>
</dbReference>
<dbReference type="InterPro" id="IPR003824">
    <property type="entry name" value="UppP"/>
</dbReference>
<dbReference type="NCBIfam" id="NF001393">
    <property type="entry name" value="PRK00281.2-4"/>
    <property type="match status" value="1"/>
</dbReference>
<dbReference type="NCBIfam" id="TIGR00753">
    <property type="entry name" value="undec_PP_bacA"/>
    <property type="match status" value="1"/>
</dbReference>
<dbReference type="PANTHER" id="PTHR30622">
    <property type="entry name" value="UNDECAPRENYL-DIPHOSPHATASE"/>
    <property type="match status" value="1"/>
</dbReference>
<dbReference type="PANTHER" id="PTHR30622:SF4">
    <property type="entry name" value="UNDECAPRENYL-DIPHOSPHATASE"/>
    <property type="match status" value="1"/>
</dbReference>
<dbReference type="Pfam" id="PF02673">
    <property type="entry name" value="BacA"/>
    <property type="match status" value="1"/>
</dbReference>
<organism>
    <name type="scientific">Geobacter metallireducens (strain ATCC 53774 / DSM 7210 / GS-15)</name>
    <dbReference type="NCBI Taxonomy" id="269799"/>
    <lineage>
        <taxon>Bacteria</taxon>
        <taxon>Pseudomonadati</taxon>
        <taxon>Thermodesulfobacteriota</taxon>
        <taxon>Desulfuromonadia</taxon>
        <taxon>Geobacterales</taxon>
        <taxon>Geobacteraceae</taxon>
        <taxon>Geobacter</taxon>
    </lineage>
</organism>
<comment type="function">
    <text evidence="1">Catalyzes the dephosphorylation of undecaprenyl diphosphate (UPP). Confers resistance to bacitracin.</text>
</comment>
<comment type="catalytic activity">
    <reaction evidence="1">
        <text>di-trans,octa-cis-undecaprenyl diphosphate + H2O = di-trans,octa-cis-undecaprenyl phosphate + phosphate + H(+)</text>
        <dbReference type="Rhea" id="RHEA:28094"/>
        <dbReference type="ChEBI" id="CHEBI:15377"/>
        <dbReference type="ChEBI" id="CHEBI:15378"/>
        <dbReference type="ChEBI" id="CHEBI:43474"/>
        <dbReference type="ChEBI" id="CHEBI:58405"/>
        <dbReference type="ChEBI" id="CHEBI:60392"/>
        <dbReference type="EC" id="3.6.1.27"/>
    </reaction>
</comment>
<comment type="subcellular location">
    <subcellularLocation>
        <location evidence="1">Cell inner membrane</location>
        <topology evidence="1">Multi-pass membrane protein</topology>
    </subcellularLocation>
</comment>
<comment type="miscellaneous">
    <text>Bacitracin is thought to be involved in the inhibition of peptidoglycan synthesis by sequestering undecaprenyl diphosphate, thereby reducing the pool of lipid carrier available.</text>
</comment>
<comment type="similarity">
    <text evidence="1">Belongs to the UppP family.</text>
</comment>
<accession>Q39QX7</accession>